<comment type="function">
    <text evidence="1 4">Modulates blood feeding of female sandflies on vertebrate species by binding and sequestering different mediators involved in the host response (By similarity). Binds leukotriene C4, leukotriene D4, leukotriene E4 and U-46619, a stable analog of thromboxane A2 (PubMed:30926880). Does not bind histamine or serotonin (PubMed:30926880). Inhibits platelet aggregation induced by low concentrations of collagen in thromboxane A2-dependent manner (PubMed:30926880).</text>
</comment>
<comment type="subcellular location">
    <subcellularLocation>
        <location evidence="1">Secreted</location>
    </subcellularLocation>
</comment>
<comment type="similarity">
    <text evidence="6">Belongs to the PBP/GOBP family.</text>
</comment>
<keyword id="KW-0002">3D-structure</keyword>
<keyword id="KW-0903">Direct protein sequencing</keyword>
<keyword id="KW-1015">Disulfide bond</keyword>
<keyword id="KW-1199">Hemostasis impairing toxin</keyword>
<keyword id="KW-1201">Platelet aggregation inhibiting toxin</keyword>
<keyword id="KW-0964">Secreted</keyword>
<keyword id="KW-0732">Signal</keyword>
<keyword id="KW-0800">Toxin</keyword>
<protein>
    <recommendedName>
        <fullName evidence="6">Long form salivary protein D7L</fullName>
    </recommendedName>
    <alternativeName>
        <fullName evidence="7">26.7 kDa salivary protein</fullName>
    </alternativeName>
    <alternativeName>
        <fullName evidence="8">D7 related protein</fullName>
    </alternativeName>
</protein>
<dbReference type="EMBL" id="DQ826517">
    <property type="protein sequence ID" value="ABI15936.1"/>
    <property type="molecule type" value="mRNA"/>
</dbReference>
<dbReference type="EMBL" id="DQ835364">
    <property type="protein sequence ID" value="ABI20169.1"/>
    <property type="molecule type" value="mRNA"/>
</dbReference>
<dbReference type="PDB" id="6MT7">
    <property type="method" value="X-ray"/>
    <property type="resolution" value="1.78 A"/>
    <property type="chains" value="A/B=20-249"/>
</dbReference>
<dbReference type="PDB" id="6MTF">
    <property type="method" value="X-ray"/>
    <property type="resolution" value="1.92 A"/>
    <property type="chains" value="A/B=20-249"/>
</dbReference>
<dbReference type="PDBsum" id="6MT7"/>
<dbReference type="PDBsum" id="6MTF"/>
<dbReference type="SMR" id="Q06KA2"/>
<dbReference type="GO" id="GO:0005615">
    <property type="term" value="C:extracellular space"/>
    <property type="evidence" value="ECO:0007669"/>
    <property type="project" value="TreeGrafter"/>
</dbReference>
<dbReference type="GO" id="GO:0005549">
    <property type="term" value="F:odorant binding"/>
    <property type="evidence" value="ECO:0007669"/>
    <property type="project" value="InterPro"/>
</dbReference>
<dbReference type="GO" id="GO:0090729">
    <property type="term" value="F:toxin activity"/>
    <property type="evidence" value="ECO:0007669"/>
    <property type="project" value="UniProtKB-KW"/>
</dbReference>
<dbReference type="GO" id="GO:0007608">
    <property type="term" value="P:sensory perception of smell"/>
    <property type="evidence" value="ECO:0007669"/>
    <property type="project" value="TreeGrafter"/>
</dbReference>
<dbReference type="CDD" id="cd23992">
    <property type="entry name" value="PBP_GOBP"/>
    <property type="match status" value="1"/>
</dbReference>
<dbReference type="Gene3D" id="1.10.238.20">
    <property type="entry name" value="Pheromone/general odorant binding protein domain"/>
    <property type="match status" value="1"/>
</dbReference>
<dbReference type="InterPro" id="IPR006170">
    <property type="entry name" value="PBP/GOBP"/>
</dbReference>
<dbReference type="InterPro" id="IPR036728">
    <property type="entry name" value="PBP_GOBP_sf"/>
</dbReference>
<dbReference type="PANTHER" id="PTHR11857:SF43">
    <property type="entry name" value="GEO07291P1-RELATED"/>
    <property type="match status" value="1"/>
</dbReference>
<dbReference type="PANTHER" id="PTHR11857">
    <property type="entry name" value="ODORANT BINDING PROTEIN-RELATED"/>
    <property type="match status" value="1"/>
</dbReference>
<dbReference type="Pfam" id="PF01395">
    <property type="entry name" value="PBP_GOBP"/>
    <property type="match status" value="1"/>
</dbReference>
<dbReference type="SUPFAM" id="SSF47565">
    <property type="entry name" value="Insect pheromone/odorant-binding proteins"/>
    <property type="match status" value="1"/>
</dbReference>
<reference evidence="7" key="1">
    <citation type="journal article" date="2006" name="BMC Genomics">
        <title>High degree of conservancy among secreted salivary gland proteins from two geographically distant Phlebotomus duboscqi sandflies populations (Mali and Kenya).</title>
        <authorList>
            <person name="Kato H."/>
            <person name="Anderson J.M."/>
            <person name="Kamhawi S."/>
            <person name="Oliveira F."/>
            <person name="Lawyer P.G."/>
            <person name="Pham V.M."/>
            <person name="Sangare C.S."/>
            <person name="Samake S."/>
            <person name="Sissoko I."/>
            <person name="Garfield M."/>
            <person name="Sigutova L."/>
            <person name="Volf P."/>
            <person name="Doumbia S."/>
            <person name="Valenzuela J.G."/>
        </authorList>
    </citation>
    <scope>NUCLEOTIDE SEQUENCE [LARGE SCALE MRNA]</scope>
    <scope>PROTEIN SEQUENCE OF 20-39</scope>
    <scope>VARIANT ASP-100</scope>
    <source>
        <strain evidence="5">Kenya</strain>
        <strain evidence="7">Mali</strain>
    </source>
</reference>
<reference evidence="9 10" key="2">
    <citation type="journal article" date="2019" name="Sci. Rep.">
        <title>Functional and structural similarities of D7 proteins in the independently-evolved salivary secretions of sand flies and mosquitoes.</title>
        <authorList>
            <person name="Jablonka W."/>
            <person name="Kim I.H."/>
            <person name="Alvarenga P.H."/>
            <person name="Valenzuela J.G."/>
            <person name="Ribeiro J.M.C."/>
            <person name="Andersen J.F."/>
        </authorList>
    </citation>
    <scope>X-RAY CRYSTALLOGRAPHY (1.78 ANGSTROMS) OF 20-249</scope>
    <scope>FUNCTION</scope>
    <scope>DISULFIDE BONDS</scope>
</reference>
<name>D7L_PHLDU</name>
<sequence>MNAVITSLVFISLVGVGYSWRYPRNADQTFWAFRTCQRQSEGAKSLREWYRWNLPNDEDTHCYVKCVWLHLGLYNEQNKSLRVDRIMEQFNSRSVAIPGGINTISGPTDGTCKDIYDKTINFFNNNVNDLRTAFYGIKKLSDEWFTQNSNTKPKGTKISDFCNAENREKGGADCQHACSAYYYRLVDEDNEPIHFRNLNILGITDEQFASCVKASKNKQGCKVADTMYNCVEKHNSQALKILDNQSPTY</sequence>
<gene>
    <name evidence="6" type="primary">D7L</name>
    <name evidence="8" type="synonym">K35</name>
</gene>
<feature type="signal peptide" evidence="3">
    <location>
        <begin position="1"/>
        <end position="19"/>
    </location>
</feature>
<feature type="chain" id="PRO_0000460142" description="Long form salivary protein D7L" evidence="6">
    <location>
        <begin position="20"/>
        <end position="249"/>
    </location>
</feature>
<feature type="binding site" evidence="2">
    <location>
        <position position="49"/>
    </location>
    <ligand>
        <name>thromboxane A2</name>
        <dbReference type="ChEBI" id="CHEBI:57445"/>
    </ligand>
</feature>
<feature type="binding site" evidence="2">
    <location>
        <position position="52"/>
    </location>
    <ligand>
        <name>leukotriene C4</name>
        <dbReference type="ChEBI" id="CHEBI:57973"/>
    </ligand>
</feature>
<feature type="binding site" evidence="2">
    <location>
        <position position="63"/>
    </location>
    <ligand>
        <name>thromboxane A2</name>
        <dbReference type="ChEBI" id="CHEBI:57445"/>
    </ligand>
</feature>
<feature type="binding site" evidence="2">
    <location>
        <position position="136"/>
    </location>
    <ligand>
        <name>leukotriene C4</name>
        <dbReference type="ChEBI" id="CHEBI:57973"/>
    </ligand>
</feature>
<feature type="binding site" evidence="2">
    <location>
        <position position="154"/>
    </location>
    <ligand>
        <name>leukotriene C4</name>
        <dbReference type="ChEBI" id="CHEBI:57973"/>
    </ligand>
</feature>
<feature type="binding site" evidence="2">
    <location>
        <position position="154"/>
    </location>
    <ligand>
        <name>thromboxane A2</name>
        <dbReference type="ChEBI" id="CHEBI:57445"/>
    </ligand>
</feature>
<feature type="disulfide bond" evidence="4 9 10">
    <location>
        <begin position="36"/>
        <end position="66"/>
    </location>
</feature>
<feature type="disulfide bond" evidence="4 9 10">
    <location>
        <begin position="62"/>
        <end position="112"/>
    </location>
</feature>
<feature type="disulfide bond" evidence="4 9 10">
    <location>
        <begin position="162"/>
        <end position="178"/>
    </location>
</feature>
<feature type="disulfide bond" evidence="4 9 10">
    <location>
        <begin position="174"/>
        <end position="221"/>
    </location>
</feature>
<feature type="disulfide bond" evidence="4 9 10">
    <location>
        <begin position="211"/>
        <end position="230"/>
    </location>
</feature>
<feature type="sequence variant" description="In population from Kenya." evidence="3">
    <original>G</original>
    <variation>D</variation>
    <location>
        <position position="100"/>
    </location>
</feature>
<feature type="helix" evidence="11">
    <location>
        <begin position="26"/>
        <end position="39"/>
    </location>
</feature>
<feature type="turn" evidence="11">
    <location>
        <begin position="40"/>
        <end position="42"/>
    </location>
</feature>
<feature type="helix" evidence="11">
    <location>
        <begin position="46"/>
        <end position="50"/>
    </location>
</feature>
<feature type="helix" evidence="11">
    <location>
        <begin position="58"/>
        <end position="70"/>
    </location>
</feature>
<feature type="turn" evidence="11">
    <location>
        <begin position="76"/>
        <end position="79"/>
    </location>
</feature>
<feature type="helix" evidence="11">
    <location>
        <begin position="83"/>
        <end position="92"/>
    </location>
</feature>
<feature type="helix" evidence="11">
    <location>
        <begin position="101"/>
        <end position="104"/>
    </location>
</feature>
<feature type="helix" evidence="11">
    <location>
        <begin position="112"/>
        <end position="124"/>
    </location>
</feature>
<feature type="helix" evidence="11">
    <location>
        <begin position="127"/>
        <end position="133"/>
    </location>
</feature>
<feature type="helix" evidence="11">
    <location>
        <begin position="138"/>
        <end position="146"/>
    </location>
</feature>
<feature type="helix" evidence="11">
    <location>
        <begin position="158"/>
        <end position="162"/>
    </location>
</feature>
<feature type="helix" evidence="11">
    <location>
        <begin position="167"/>
        <end position="169"/>
    </location>
</feature>
<feature type="turn" evidence="11">
    <location>
        <begin position="170"/>
        <end position="173"/>
    </location>
</feature>
<feature type="helix" evidence="11">
    <location>
        <begin position="177"/>
        <end position="182"/>
    </location>
</feature>
<feature type="helix" evidence="11">
    <location>
        <begin position="199"/>
        <end position="201"/>
    </location>
</feature>
<feature type="helix" evidence="11">
    <location>
        <begin position="205"/>
        <end position="214"/>
    </location>
</feature>
<feature type="helix" evidence="11">
    <location>
        <begin position="221"/>
        <end position="234"/>
    </location>
</feature>
<feature type="helix" evidence="11">
    <location>
        <begin position="238"/>
        <end position="245"/>
    </location>
</feature>
<accession>Q06KA2</accession>
<accession>Q06K54</accession>
<evidence type="ECO:0000250" key="1">
    <source>
        <dbReference type="UniProtKB" id="P18153"/>
    </source>
</evidence>
<evidence type="ECO:0000250" key="2">
    <source>
        <dbReference type="UniProtKB" id="Q95NY5"/>
    </source>
</evidence>
<evidence type="ECO:0000269" key="3">
    <source>
    </source>
</evidence>
<evidence type="ECO:0000269" key="4">
    <source>
    </source>
</evidence>
<evidence type="ECO:0000303" key="5">
    <source>
    </source>
</evidence>
<evidence type="ECO:0000305" key="6"/>
<evidence type="ECO:0000312" key="7">
    <source>
        <dbReference type="EMBL" id="ABI15936.1"/>
    </source>
</evidence>
<evidence type="ECO:0000312" key="8">
    <source>
        <dbReference type="EMBL" id="ABI20169.1"/>
    </source>
</evidence>
<evidence type="ECO:0007744" key="9">
    <source>
        <dbReference type="PDB" id="6MT7"/>
    </source>
</evidence>
<evidence type="ECO:0007744" key="10">
    <source>
        <dbReference type="PDB" id="6MTF"/>
    </source>
</evidence>
<evidence type="ECO:0007829" key="11">
    <source>
        <dbReference type="PDB" id="6MT7"/>
    </source>
</evidence>
<organism evidence="7">
    <name type="scientific">Phlebotomus duboscqi</name>
    <name type="common">Sandfly</name>
    <dbReference type="NCBI Taxonomy" id="37738"/>
    <lineage>
        <taxon>Eukaryota</taxon>
        <taxon>Metazoa</taxon>
        <taxon>Ecdysozoa</taxon>
        <taxon>Arthropoda</taxon>
        <taxon>Hexapoda</taxon>
        <taxon>Insecta</taxon>
        <taxon>Pterygota</taxon>
        <taxon>Neoptera</taxon>
        <taxon>Endopterygota</taxon>
        <taxon>Diptera</taxon>
        <taxon>Nematocera</taxon>
        <taxon>Psychodoidea</taxon>
        <taxon>Psychodidae</taxon>
        <taxon>Phlebotomus</taxon>
        <taxon>Phlebotomus</taxon>
    </lineage>
</organism>
<proteinExistence type="evidence at protein level"/>